<dbReference type="EC" id="5.6.1.7" evidence="1"/>
<dbReference type="EMBL" id="AF221845">
    <property type="protein sequence ID" value="AAF27528.1"/>
    <property type="molecule type" value="Genomic_DNA"/>
</dbReference>
<dbReference type="EMBL" id="BA000031">
    <property type="protein sequence ID" value="BAC61114.1"/>
    <property type="molecule type" value="Genomic_DNA"/>
</dbReference>
<dbReference type="RefSeq" id="NP_799230.1">
    <property type="nucleotide sequence ID" value="NC_004603.1"/>
</dbReference>
<dbReference type="SMR" id="Q9L7P5"/>
<dbReference type="GeneID" id="1190414"/>
<dbReference type="KEGG" id="vpa:VP2851"/>
<dbReference type="PATRIC" id="fig|223926.6.peg.2743"/>
<dbReference type="eggNOG" id="COG0459">
    <property type="taxonomic scope" value="Bacteria"/>
</dbReference>
<dbReference type="HOGENOM" id="CLU_016503_3_0_6"/>
<dbReference type="Proteomes" id="UP000002493">
    <property type="component" value="Chromosome 1"/>
</dbReference>
<dbReference type="GO" id="GO:0005737">
    <property type="term" value="C:cytoplasm"/>
    <property type="evidence" value="ECO:0007669"/>
    <property type="project" value="UniProtKB-SubCell"/>
</dbReference>
<dbReference type="GO" id="GO:0005524">
    <property type="term" value="F:ATP binding"/>
    <property type="evidence" value="ECO:0007669"/>
    <property type="project" value="UniProtKB-UniRule"/>
</dbReference>
<dbReference type="GO" id="GO:0140662">
    <property type="term" value="F:ATP-dependent protein folding chaperone"/>
    <property type="evidence" value="ECO:0007669"/>
    <property type="project" value="InterPro"/>
</dbReference>
<dbReference type="GO" id="GO:0016853">
    <property type="term" value="F:isomerase activity"/>
    <property type="evidence" value="ECO:0007669"/>
    <property type="project" value="UniProtKB-KW"/>
</dbReference>
<dbReference type="GO" id="GO:0051082">
    <property type="term" value="F:unfolded protein binding"/>
    <property type="evidence" value="ECO:0007669"/>
    <property type="project" value="UniProtKB-UniRule"/>
</dbReference>
<dbReference type="GO" id="GO:0042026">
    <property type="term" value="P:protein refolding"/>
    <property type="evidence" value="ECO:0007669"/>
    <property type="project" value="UniProtKB-UniRule"/>
</dbReference>
<dbReference type="CDD" id="cd03344">
    <property type="entry name" value="GroEL"/>
    <property type="match status" value="1"/>
</dbReference>
<dbReference type="FunFam" id="1.10.560.10:FF:000001">
    <property type="entry name" value="60 kDa chaperonin"/>
    <property type="match status" value="1"/>
</dbReference>
<dbReference type="FunFam" id="3.50.7.10:FF:000001">
    <property type="entry name" value="60 kDa chaperonin"/>
    <property type="match status" value="1"/>
</dbReference>
<dbReference type="Gene3D" id="3.50.7.10">
    <property type="entry name" value="GroEL"/>
    <property type="match status" value="1"/>
</dbReference>
<dbReference type="Gene3D" id="1.10.560.10">
    <property type="entry name" value="GroEL-like equatorial domain"/>
    <property type="match status" value="1"/>
</dbReference>
<dbReference type="Gene3D" id="3.30.260.10">
    <property type="entry name" value="TCP-1-like chaperonin intermediate domain"/>
    <property type="match status" value="1"/>
</dbReference>
<dbReference type="HAMAP" id="MF_00600">
    <property type="entry name" value="CH60"/>
    <property type="match status" value="1"/>
</dbReference>
<dbReference type="InterPro" id="IPR018370">
    <property type="entry name" value="Chaperonin_Cpn60_CS"/>
</dbReference>
<dbReference type="InterPro" id="IPR001844">
    <property type="entry name" value="Cpn60/GroEL"/>
</dbReference>
<dbReference type="InterPro" id="IPR002423">
    <property type="entry name" value="Cpn60/GroEL/TCP-1"/>
</dbReference>
<dbReference type="InterPro" id="IPR027409">
    <property type="entry name" value="GroEL-like_apical_dom_sf"/>
</dbReference>
<dbReference type="InterPro" id="IPR027413">
    <property type="entry name" value="GROEL-like_equatorial_sf"/>
</dbReference>
<dbReference type="InterPro" id="IPR027410">
    <property type="entry name" value="TCP-1-like_intermed_sf"/>
</dbReference>
<dbReference type="NCBIfam" id="TIGR02348">
    <property type="entry name" value="GroEL"/>
    <property type="match status" value="1"/>
</dbReference>
<dbReference type="NCBIfam" id="NF000592">
    <property type="entry name" value="PRK00013.1"/>
    <property type="match status" value="1"/>
</dbReference>
<dbReference type="NCBIfam" id="NF009487">
    <property type="entry name" value="PRK12849.1"/>
    <property type="match status" value="1"/>
</dbReference>
<dbReference type="NCBIfam" id="NF009488">
    <property type="entry name" value="PRK12850.1"/>
    <property type="match status" value="1"/>
</dbReference>
<dbReference type="NCBIfam" id="NF009489">
    <property type="entry name" value="PRK12851.1"/>
    <property type="match status" value="1"/>
</dbReference>
<dbReference type="PANTHER" id="PTHR45633">
    <property type="entry name" value="60 KDA HEAT SHOCK PROTEIN, MITOCHONDRIAL"/>
    <property type="match status" value="1"/>
</dbReference>
<dbReference type="Pfam" id="PF00118">
    <property type="entry name" value="Cpn60_TCP1"/>
    <property type="match status" value="1"/>
</dbReference>
<dbReference type="PRINTS" id="PR00298">
    <property type="entry name" value="CHAPERONIN60"/>
</dbReference>
<dbReference type="SUPFAM" id="SSF52029">
    <property type="entry name" value="GroEL apical domain-like"/>
    <property type="match status" value="1"/>
</dbReference>
<dbReference type="SUPFAM" id="SSF48592">
    <property type="entry name" value="GroEL equatorial domain-like"/>
    <property type="match status" value="1"/>
</dbReference>
<dbReference type="SUPFAM" id="SSF54849">
    <property type="entry name" value="GroEL-intermediate domain like"/>
    <property type="match status" value="1"/>
</dbReference>
<dbReference type="PROSITE" id="PS00296">
    <property type="entry name" value="CHAPERONINS_CPN60"/>
    <property type="match status" value="1"/>
</dbReference>
<organism>
    <name type="scientific">Vibrio parahaemolyticus serotype O3:K6 (strain RIMD 2210633)</name>
    <dbReference type="NCBI Taxonomy" id="223926"/>
    <lineage>
        <taxon>Bacteria</taxon>
        <taxon>Pseudomonadati</taxon>
        <taxon>Pseudomonadota</taxon>
        <taxon>Gammaproteobacteria</taxon>
        <taxon>Vibrionales</taxon>
        <taxon>Vibrionaceae</taxon>
        <taxon>Vibrio</taxon>
    </lineage>
</organism>
<sequence>MAAKDVKFGNDARVKMLEGVNVLADAVKVTLGPKGRNVVLDKSFGAPTITKDGVSVAREIELEDKFQNMGAQMVKEVASKANDAAGDGTTTATVLAQAIVNEGLKAVAAGMNPMDLKRGIDKAVAAAVEQLKELSVECNDTKAIAQVGTISANSDASVGNIIAEAMERVGRDGVITVEEGQALQDELDVVEGMQFDRGYLSPYFINNQEAGSVELENPFILLVDKKISNIRELLPTLEAVAKASRPLLIIAEDVEGEALATLVVNNMRGIVKVAAVKAPGFGDRRKAMLQDIAILTGGTVISEEIGLELEKVTLEDLGQAKRVSITKENSTIIDGAGEEAMIQGRVAQIRQQIEDATSDYDKEKLQERVAKLAGGVAVIKVGAATEVEMKEKKDRVEDALHATRAAVEEGVVAGGGVALIRAASKIVDLEGDNEEQNVGIRVALRAMEAPIRQITKNAGDEDSVVANNVKAGEGSYGYNAATGEYGDMLEMGILDPTKVTRSALQFAASVAGLMITTEAMVTDLPQKESAGMPDMGGMGGMGGMGMM</sequence>
<proteinExistence type="inferred from homology"/>
<feature type="chain" id="PRO_0000063597" description="Chaperonin GroEL 1">
    <location>
        <begin position="1"/>
        <end position="547"/>
    </location>
</feature>
<feature type="binding site" evidence="1">
    <location>
        <begin position="30"/>
        <end position="33"/>
    </location>
    <ligand>
        <name>ATP</name>
        <dbReference type="ChEBI" id="CHEBI:30616"/>
    </ligand>
</feature>
<feature type="binding site" evidence="1">
    <location>
        <position position="51"/>
    </location>
    <ligand>
        <name>ATP</name>
        <dbReference type="ChEBI" id="CHEBI:30616"/>
    </ligand>
</feature>
<feature type="binding site" evidence="1">
    <location>
        <begin position="87"/>
        <end position="91"/>
    </location>
    <ligand>
        <name>ATP</name>
        <dbReference type="ChEBI" id="CHEBI:30616"/>
    </ligand>
</feature>
<feature type="binding site" evidence="1">
    <location>
        <position position="415"/>
    </location>
    <ligand>
        <name>ATP</name>
        <dbReference type="ChEBI" id="CHEBI:30616"/>
    </ligand>
</feature>
<feature type="binding site" evidence="1">
    <location>
        <begin position="479"/>
        <end position="481"/>
    </location>
    <ligand>
        <name>ATP</name>
        <dbReference type="ChEBI" id="CHEBI:30616"/>
    </ligand>
</feature>
<feature type="binding site" evidence="1">
    <location>
        <position position="495"/>
    </location>
    <ligand>
        <name>ATP</name>
        <dbReference type="ChEBI" id="CHEBI:30616"/>
    </ligand>
</feature>
<feature type="sequence conflict" description="In Ref. 1; AAF27528." evidence="2" ref="1">
    <original>G</original>
    <variation>GG</variation>
    <location>
        <position position="545"/>
    </location>
</feature>
<gene>
    <name evidence="1" type="primary">groEL1</name>
    <name evidence="1" type="synonym">groL1</name>
    <name type="ordered locus">VP2851</name>
</gene>
<reference key="1">
    <citation type="submission" date="2000-01" db="EMBL/GenBank/DDBJ databases">
        <title>GroEL gene sequence of Vibrio parahaemolyticus.</title>
        <authorList>
            <person name="Wong H.-C."/>
            <person name="Lu K.-H."/>
        </authorList>
    </citation>
    <scope>NUCLEOTIDE SEQUENCE [GENOMIC DNA]</scope>
</reference>
<reference key="2">
    <citation type="journal article" date="2003" name="Lancet">
        <title>Genome sequence of Vibrio parahaemolyticus: a pathogenic mechanism distinct from that of V. cholerae.</title>
        <authorList>
            <person name="Makino K."/>
            <person name="Oshima K."/>
            <person name="Kurokawa K."/>
            <person name="Yokoyama K."/>
            <person name="Uda T."/>
            <person name="Tagomori K."/>
            <person name="Iijima Y."/>
            <person name="Najima M."/>
            <person name="Nakano M."/>
            <person name="Yamashita A."/>
            <person name="Kubota Y."/>
            <person name="Kimura S."/>
            <person name="Yasunaga T."/>
            <person name="Honda T."/>
            <person name="Shinagawa H."/>
            <person name="Hattori M."/>
            <person name="Iida T."/>
        </authorList>
    </citation>
    <scope>NUCLEOTIDE SEQUENCE [LARGE SCALE GENOMIC DNA]</scope>
    <source>
        <strain>RIMD 2210633</strain>
    </source>
</reference>
<keyword id="KW-0067">ATP-binding</keyword>
<keyword id="KW-0143">Chaperone</keyword>
<keyword id="KW-0963">Cytoplasm</keyword>
<keyword id="KW-0413">Isomerase</keyword>
<keyword id="KW-0547">Nucleotide-binding</keyword>
<comment type="function">
    <text evidence="1">Together with its co-chaperonin GroES, plays an essential role in assisting protein folding. The GroEL-GroES system forms a nano-cage that allows encapsulation of the non-native substrate proteins and provides a physical environment optimized to promote and accelerate protein folding.</text>
</comment>
<comment type="catalytic activity">
    <reaction evidence="1">
        <text>ATP + H2O + a folded polypeptide = ADP + phosphate + an unfolded polypeptide.</text>
        <dbReference type="EC" id="5.6.1.7"/>
    </reaction>
</comment>
<comment type="subunit">
    <text evidence="1">Forms a cylinder of 14 subunits composed of two heptameric rings stacked back-to-back. Interacts with the co-chaperonin GroES.</text>
</comment>
<comment type="subcellular location">
    <subcellularLocation>
        <location evidence="1">Cytoplasm</location>
    </subcellularLocation>
</comment>
<comment type="similarity">
    <text evidence="1">Belongs to the chaperonin (HSP60) family.</text>
</comment>
<protein>
    <recommendedName>
        <fullName evidence="1">Chaperonin GroEL 1</fullName>
        <ecNumber evidence="1">5.6.1.7</ecNumber>
    </recommendedName>
    <alternativeName>
        <fullName evidence="1">60 kDa chaperonin 1</fullName>
    </alternativeName>
    <alternativeName>
        <fullName evidence="1">Chaperonin-60 1</fullName>
        <shortName evidence="1">Cpn60 1</shortName>
    </alternativeName>
</protein>
<evidence type="ECO:0000255" key="1">
    <source>
        <dbReference type="HAMAP-Rule" id="MF_00600"/>
    </source>
</evidence>
<evidence type="ECO:0000305" key="2"/>
<accession>Q9L7P5</accession>
<name>CH601_VIBPA</name>